<organism>
    <name type="scientific">Salmonella heidelberg (strain SL476)</name>
    <dbReference type="NCBI Taxonomy" id="454169"/>
    <lineage>
        <taxon>Bacteria</taxon>
        <taxon>Pseudomonadati</taxon>
        <taxon>Pseudomonadota</taxon>
        <taxon>Gammaproteobacteria</taxon>
        <taxon>Enterobacterales</taxon>
        <taxon>Enterobacteriaceae</taxon>
        <taxon>Salmonella</taxon>
    </lineage>
</organism>
<reference key="1">
    <citation type="journal article" date="2011" name="J. Bacteriol.">
        <title>Comparative genomics of 28 Salmonella enterica isolates: evidence for CRISPR-mediated adaptive sublineage evolution.</title>
        <authorList>
            <person name="Fricke W.F."/>
            <person name="Mammel M.K."/>
            <person name="McDermott P.F."/>
            <person name="Tartera C."/>
            <person name="White D.G."/>
            <person name="Leclerc J.E."/>
            <person name="Ravel J."/>
            <person name="Cebula T.A."/>
        </authorList>
    </citation>
    <scope>NUCLEOTIDE SEQUENCE [LARGE SCALE GENOMIC DNA]</scope>
    <source>
        <strain>SL476</strain>
    </source>
</reference>
<proteinExistence type="inferred from homology"/>
<gene>
    <name evidence="1" type="primary">cmk</name>
    <name type="ordered locus">SeHA_C1078</name>
</gene>
<keyword id="KW-0067">ATP-binding</keyword>
<keyword id="KW-0963">Cytoplasm</keyword>
<keyword id="KW-0418">Kinase</keyword>
<keyword id="KW-0547">Nucleotide-binding</keyword>
<keyword id="KW-0808">Transferase</keyword>
<feature type="chain" id="PRO_1000100683" description="Cytidylate kinase">
    <location>
        <begin position="1"/>
        <end position="227"/>
    </location>
</feature>
<feature type="binding site" evidence="1">
    <location>
        <begin position="12"/>
        <end position="20"/>
    </location>
    <ligand>
        <name>ATP</name>
        <dbReference type="ChEBI" id="CHEBI:30616"/>
    </ligand>
</feature>
<dbReference type="EC" id="2.7.4.25" evidence="1"/>
<dbReference type="EMBL" id="CP001120">
    <property type="protein sequence ID" value="ACF69691.1"/>
    <property type="molecule type" value="Genomic_DNA"/>
</dbReference>
<dbReference type="RefSeq" id="WP_000125007.1">
    <property type="nucleotide sequence ID" value="NC_011083.1"/>
</dbReference>
<dbReference type="SMR" id="B4TD40"/>
<dbReference type="KEGG" id="seh:SeHA_C1078"/>
<dbReference type="HOGENOM" id="CLU_079959_0_2_6"/>
<dbReference type="Proteomes" id="UP000001866">
    <property type="component" value="Chromosome"/>
</dbReference>
<dbReference type="GO" id="GO:0005829">
    <property type="term" value="C:cytosol"/>
    <property type="evidence" value="ECO:0007669"/>
    <property type="project" value="TreeGrafter"/>
</dbReference>
<dbReference type="GO" id="GO:0005524">
    <property type="term" value="F:ATP binding"/>
    <property type="evidence" value="ECO:0007669"/>
    <property type="project" value="UniProtKB-UniRule"/>
</dbReference>
<dbReference type="GO" id="GO:0036430">
    <property type="term" value="F:CMP kinase activity"/>
    <property type="evidence" value="ECO:0007669"/>
    <property type="project" value="RHEA"/>
</dbReference>
<dbReference type="GO" id="GO:0036431">
    <property type="term" value="F:dCMP kinase activity"/>
    <property type="evidence" value="ECO:0007669"/>
    <property type="project" value="RHEA"/>
</dbReference>
<dbReference type="GO" id="GO:0015949">
    <property type="term" value="P:nucleobase-containing small molecule interconversion"/>
    <property type="evidence" value="ECO:0007669"/>
    <property type="project" value="TreeGrafter"/>
</dbReference>
<dbReference type="GO" id="GO:0006220">
    <property type="term" value="P:pyrimidine nucleotide metabolic process"/>
    <property type="evidence" value="ECO:0007669"/>
    <property type="project" value="UniProtKB-UniRule"/>
</dbReference>
<dbReference type="CDD" id="cd02020">
    <property type="entry name" value="CMPK"/>
    <property type="match status" value="1"/>
</dbReference>
<dbReference type="FunFam" id="3.40.50.300:FF:000262">
    <property type="entry name" value="Cytidylate kinase"/>
    <property type="match status" value="1"/>
</dbReference>
<dbReference type="Gene3D" id="3.40.50.300">
    <property type="entry name" value="P-loop containing nucleotide triphosphate hydrolases"/>
    <property type="match status" value="1"/>
</dbReference>
<dbReference type="HAMAP" id="MF_00238">
    <property type="entry name" value="Cytidyl_kinase_type1"/>
    <property type="match status" value="1"/>
</dbReference>
<dbReference type="InterPro" id="IPR003136">
    <property type="entry name" value="Cytidylate_kin"/>
</dbReference>
<dbReference type="InterPro" id="IPR011994">
    <property type="entry name" value="Cytidylate_kinase_dom"/>
</dbReference>
<dbReference type="InterPro" id="IPR027417">
    <property type="entry name" value="P-loop_NTPase"/>
</dbReference>
<dbReference type="NCBIfam" id="TIGR00017">
    <property type="entry name" value="cmk"/>
    <property type="match status" value="1"/>
</dbReference>
<dbReference type="PANTHER" id="PTHR21299:SF2">
    <property type="entry name" value="CYTIDYLATE KINASE"/>
    <property type="match status" value="1"/>
</dbReference>
<dbReference type="PANTHER" id="PTHR21299">
    <property type="entry name" value="CYTIDYLATE KINASE/PANTOATE-BETA-ALANINE LIGASE"/>
    <property type="match status" value="1"/>
</dbReference>
<dbReference type="Pfam" id="PF02224">
    <property type="entry name" value="Cytidylate_kin"/>
    <property type="match status" value="1"/>
</dbReference>
<dbReference type="SUPFAM" id="SSF52540">
    <property type="entry name" value="P-loop containing nucleoside triphosphate hydrolases"/>
    <property type="match status" value="1"/>
</dbReference>
<name>KCY_SALHS</name>
<comment type="catalytic activity">
    <reaction evidence="1">
        <text>CMP + ATP = CDP + ADP</text>
        <dbReference type="Rhea" id="RHEA:11600"/>
        <dbReference type="ChEBI" id="CHEBI:30616"/>
        <dbReference type="ChEBI" id="CHEBI:58069"/>
        <dbReference type="ChEBI" id="CHEBI:60377"/>
        <dbReference type="ChEBI" id="CHEBI:456216"/>
        <dbReference type="EC" id="2.7.4.25"/>
    </reaction>
</comment>
<comment type="catalytic activity">
    <reaction evidence="1">
        <text>dCMP + ATP = dCDP + ADP</text>
        <dbReference type="Rhea" id="RHEA:25094"/>
        <dbReference type="ChEBI" id="CHEBI:30616"/>
        <dbReference type="ChEBI" id="CHEBI:57566"/>
        <dbReference type="ChEBI" id="CHEBI:58593"/>
        <dbReference type="ChEBI" id="CHEBI:456216"/>
        <dbReference type="EC" id="2.7.4.25"/>
    </reaction>
</comment>
<comment type="subcellular location">
    <subcellularLocation>
        <location evidence="1">Cytoplasm</location>
    </subcellularLocation>
</comment>
<comment type="similarity">
    <text evidence="1">Belongs to the cytidylate kinase family. Type 1 subfamily.</text>
</comment>
<accession>B4TD40</accession>
<evidence type="ECO:0000255" key="1">
    <source>
        <dbReference type="HAMAP-Rule" id="MF_00238"/>
    </source>
</evidence>
<protein>
    <recommendedName>
        <fullName evidence="1">Cytidylate kinase</fullName>
        <shortName evidence="1">CK</shortName>
        <ecNumber evidence="1">2.7.4.25</ecNumber>
    </recommendedName>
    <alternativeName>
        <fullName evidence="1">Cytidine monophosphate kinase</fullName>
        <shortName evidence="1">CMP kinase</shortName>
    </alternativeName>
</protein>
<sequence>MTAIAPVITIDGPSGAGKGTLCKAMAEALQWHLLDSGAIYRVLALAALHHHVDLASEDALVPLASHLDVRFVSTDGNLEVILEGEDVSGEIRTQEVANAASQVAAFPRVREALLRRQRAFREAPGLIADGRDMGTVVFPDAPVKIFLDASSEERAHRRMLQLQENGFSVNFERLLAEIKERDDRDRNRAVAPLVPAADALVLDSTRLSIEQVIEKALQYARQKLALA</sequence>